<dbReference type="EC" id="4.2.1.59" evidence="1"/>
<dbReference type="EMBL" id="BA000037">
    <property type="protein sequence ID" value="BAC95310.1"/>
    <property type="molecule type" value="Genomic_DNA"/>
</dbReference>
<dbReference type="RefSeq" id="WP_011079773.1">
    <property type="nucleotide sequence ID" value="NC_005139.1"/>
</dbReference>
<dbReference type="SMR" id="Q7M7J1"/>
<dbReference type="STRING" id="672.VV93_v1c22650"/>
<dbReference type="GeneID" id="93896098"/>
<dbReference type="KEGG" id="vvy:VV2546"/>
<dbReference type="eggNOG" id="COG0764">
    <property type="taxonomic scope" value="Bacteria"/>
</dbReference>
<dbReference type="HOGENOM" id="CLU_078912_1_0_6"/>
<dbReference type="Proteomes" id="UP000002675">
    <property type="component" value="Chromosome I"/>
</dbReference>
<dbReference type="GO" id="GO:0005737">
    <property type="term" value="C:cytoplasm"/>
    <property type="evidence" value="ECO:0007669"/>
    <property type="project" value="UniProtKB-SubCell"/>
</dbReference>
<dbReference type="GO" id="GO:0016020">
    <property type="term" value="C:membrane"/>
    <property type="evidence" value="ECO:0007669"/>
    <property type="project" value="GOC"/>
</dbReference>
<dbReference type="GO" id="GO:0019171">
    <property type="term" value="F:(3R)-hydroxyacyl-[acyl-carrier-protein] dehydratase activity"/>
    <property type="evidence" value="ECO:0007669"/>
    <property type="project" value="UniProtKB-EC"/>
</dbReference>
<dbReference type="GO" id="GO:0006633">
    <property type="term" value="P:fatty acid biosynthetic process"/>
    <property type="evidence" value="ECO:0007669"/>
    <property type="project" value="UniProtKB-UniRule"/>
</dbReference>
<dbReference type="GO" id="GO:0009245">
    <property type="term" value="P:lipid A biosynthetic process"/>
    <property type="evidence" value="ECO:0007669"/>
    <property type="project" value="UniProtKB-UniRule"/>
</dbReference>
<dbReference type="CDD" id="cd01288">
    <property type="entry name" value="FabZ"/>
    <property type="match status" value="1"/>
</dbReference>
<dbReference type="FunFam" id="3.10.129.10:FF:000001">
    <property type="entry name" value="3-hydroxyacyl-[acyl-carrier-protein] dehydratase FabZ"/>
    <property type="match status" value="1"/>
</dbReference>
<dbReference type="Gene3D" id="3.10.129.10">
    <property type="entry name" value="Hotdog Thioesterase"/>
    <property type="match status" value="1"/>
</dbReference>
<dbReference type="HAMAP" id="MF_00406">
    <property type="entry name" value="FabZ"/>
    <property type="match status" value="1"/>
</dbReference>
<dbReference type="InterPro" id="IPR013114">
    <property type="entry name" value="FabA_FabZ"/>
</dbReference>
<dbReference type="InterPro" id="IPR010084">
    <property type="entry name" value="FabZ"/>
</dbReference>
<dbReference type="InterPro" id="IPR029069">
    <property type="entry name" value="HotDog_dom_sf"/>
</dbReference>
<dbReference type="NCBIfam" id="TIGR01750">
    <property type="entry name" value="fabZ"/>
    <property type="match status" value="1"/>
</dbReference>
<dbReference type="NCBIfam" id="NF000582">
    <property type="entry name" value="PRK00006.1"/>
    <property type="match status" value="1"/>
</dbReference>
<dbReference type="PANTHER" id="PTHR30272">
    <property type="entry name" value="3-HYDROXYACYL-[ACYL-CARRIER-PROTEIN] DEHYDRATASE"/>
    <property type="match status" value="1"/>
</dbReference>
<dbReference type="PANTHER" id="PTHR30272:SF1">
    <property type="entry name" value="3-HYDROXYACYL-[ACYL-CARRIER-PROTEIN] DEHYDRATASE"/>
    <property type="match status" value="1"/>
</dbReference>
<dbReference type="Pfam" id="PF07977">
    <property type="entry name" value="FabA"/>
    <property type="match status" value="1"/>
</dbReference>
<dbReference type="SUPFAM" id="SSF54637">
    <property type="entry name" value="Thioesterase/thiol ester dehydrase-isomerase"/>
    <property type="match status" value="1"/>
</dbReference>
<feature type="chain" id="PRO_0000091760" description="3-hydroxyacyl-[acyl-carrier-protein] dehydratase FabZ">
    <location>
        <begin position="1"/>
        <end position="150"/>
    </location>
</feature>
<feature type="active site" evidence="1">
    <location>
        <position position="54"/>
    </location>
</feature>
<gene>
    <name evidence="1" type="primary">fabZ</name>
    <name type="ordered locus">VV2546</name>
</gene>
<keyword id="KW-0963">Cytoplasm</keyword>
<keyword id="KW-0441">Lipid A biosynthesis</keyword>
<keyword id="KW-0444">Lipid biosynthesis</keyword>
<keyword id="KW-0443">Lipid metabolism</keyword>
<keyword id="KW-0456">Lyase</keyword>
<proteinExistence type="inferred from homology"/>
<protein>
    <recommendedName>
        <fullName evidence="1">3-hydroxyacyl-[acyl-carrier-protein] dehydratase FabZ</fullName>
        <ecNumber evidence="1">4.2.1.59</ecNumber>
    </recommendedName>
    <alternativeName>
        <fullName evidence="1">(3R)-hydroxymyristoyl-[acyl-carrier-protein] dehydratase</fullName>
        <shortName evidence="1">(3R)-hydroxymyristoyl-ACP dehydrase</shortName>
    </alternativeName>
    <alternativeName>
        <fullName evidence="1">Beta-hydroxyacyl-ACP dehydratase</fullName>
    </alternativeName>
</protein>
<comment type="function">
    <text evidence="1">Involved in unsaturated fatty acids biosynthesis. Catalyzes the dehydration of short chain beta-hydroxyacyl-ACPs and long chain saturated and unsaturated beta-hydroxyacyl-ACPs.</text>
</comment>
<comment type="catalytic activity">
    <reaction evidence="1">
        <text>a (3R)-hydroxyacyl-[ACP] = a (2E)-enoyl-[ACP] + H2O</text>
        <dbReference type="Rhea" id="RHEA:13097"/>
        <dbReference type="Rhea" id="RHEA-COMP:9925"/>
        <dbReference type="Rhea" id="RHEA-COMP:9945"/>
        <dbReference type="ChEBI" id="CHEBI:15377"/>
        <dbReference type="ChEBI" id="CHEBI:78784"/>
        <dbReference type="ChEBI" id="CHEBI:78827"/>
        <dbReference type="EC" id="4.2.1.59"/>
    </reaction>
</comment>
<comment type="subcellular location">
    <subcellularLocation>
        <location evidence="1">Cytoplasm</location>
    </subcellularLocation>
</comment>
<comment type="similarity">
    <text evidence="1">Belongs to the thioester dehydratase family. FabZ subfamily.</text>
</comment>
<name>FABZ_VIBVY</name>
<sequence>MTTEKKTMNISEIQELLPHRYPFLLIDRVVDFQEEKYLHAIKNVSVNEPQFTGHFPQLPVFPGVLILEAMAQATGLLAFKSFGAPSENELYYFASVDGAKFRKPVVPGDQLIIEVEFIKERRGIAAFTGVAKVDGDVVCSAELKCARREF</sequence>
<evidence type="ECO:0000255" key="1">
    <source>
        <dbReference type="HAMAP-Rule" id="MF_00406"/>
    </source>
</evidence>
<accession>Q7M7J1</accession>
<organism>
    <name type="scientific">Vibrio vulnificus (strain YJ016)</name>
    <dbReference type="NCBI Taxonomy" id="196600"/>
    <lineage>
        <taxon>Bacteria</taxon>
        <taxon>Pseudomonadati</taxon>
        <taxon>Pseudomonadota</taxon>
        <taxon>Gammaproteobacteria</taxon>
        <taxon>Vibrionales</taxon>
        <taxon>Vibrionaceae</taxon>
        <taxon>Vibrio</taxon>
    </lineage>
</organism>
<reference key="1">
    <citation type="journal article" date="2003" name="Genome Res.">
        <title>Comparative genome analysis of Vibrio vulnificus, a marine pathogen.</title>
        <authorList>
            <person name="Chen C.-Y."/>
            <person name="Wu K.-M."/>
            <person name="Chang Y.-C."/>
            <person name="Chang C.-H."/>
            <person name="Tsai H.-C."/>
            <person name="Liao T.-L."/>
            <person name="Liu Y.-M."/>
            <person name="Chen H.-J."/>
            <person name="Shen A.B.-T."/>
            <person name="Li J.-C."/>
            <person name="Su T.-L."/>
            <person name="Shao C.-P."/>
            <person name="Lee C.-T."/>
            <person name="Hor L.-I."/>
            <person name="Tsai S.-F."/>
        </authorList>
    </citation>
    <scope>NUCLEOTIDE SEQUENCE [LARGE SCALE GENOMIC DNA]</scope>
    <source>
        <strain>YJ016</strain>
    </source>
</reference>